<evidence type="ECO:0000255" key="1">
    <source>
        <dbReference type="HAMAP-Rule" id="MF_01950"/>
    </source>
</evidence>
<proteinExistence type="inferred from homology"/>
<protein>
    <recommendedName>
        <fullName evidence="1">Acyl carrier protein phosphodiesterase</fullName>
        <shortName evidence="1">ACP phosphodiesterase</shortName>
        <ecNumber evidence="1">3.1.4.14</ecNumber>
    </recommendedName>
</protein>
<comment type="function">
    <text evidence="1">Converts holo-ACP to apo-ACP by hydrolytic cleavage of the phosphopantetheine prosthetic group from ACP.</text>
</comment>
<comment type="catalytic activity">
    <reaction evidence="1">
        <text>holo-[ACP] + H2O = apo-[ACP] + (R)-4'-phosphopantetheine + H(+)</text>
        <dbReference type="Rhea" id="RHEA:20537"/>
        <dbReference type="Rhea" id="RHEA-COMP:9685"/>
        <dbReference type="Rhea" id="RHEA-COMP:9690"/>
        <dbReference type="ChEBI" id="CHEBI:15377"/>
        <dbReference type="ChEBI" id="CHEBI:15378"/>
        <dbReference type="ChEBI" id="CHEBI:29999"/>
        <dbReference type="ChEBI" id="CHEBI:61723"/>
        <dbReference type="ChEBI" id="CHEBI:64479"/>
        <dbReference type="EC" id="3.1.4.14"/>
    </reaction>
</comment>
<comment type="similarity">
    <text evidence="1">Belongs to the AcpH family.</text>
</comment>
<accession>Q5PFT4</accession>
<feature type="chain" id="PRO_0000226271" description="Acyl carrier protein phosphodiesterase">
    <location>
        <begin position="1"/>
        <end position="193"/>
    </location>
</feature>
<name>ACPH_SALPA</name>
<dbReference type="EC" id="3.1.4.14" evidence="1"/>
<dbReference type="EMBL" id="CP000026">
    <property type="protein sequence ID" value="AAV78205.1"/>
    <property type="molecule type" value="Genomic_DNA"/>
</dbReference>
<dbReference type="RefSeq" id="WP_001009851.1">
    <property type="nucleotide sequence ID" value="NC_006511.1"/>
</dbReference>
<dbReference type="KEGG" id="spt:SPA2320"/>
<dbReference type="HOGENOM" id="CLU_099370_1_0_6"/>
<dbReference type="Proteomes" id="UP000008185">
    <property type="component" value="Chromosome"/>
</dbReference>
<dbReference type="GO" id="GO:0008770">
    <property type="term" value="F:[acyl-carrier-protein] phosphodiesterase activity"/>
    <property type="evidence" value="ECO:0007669"/>
    <property type="project" value="UniProtKB-UniRule"/>
</dbReference>
<dbReference type="GO" id="GO:0006633">
    <property type="term" value="P:fatty acid biosynthetic process"/>
    <property type="evidence" value="ECO:0007669"/>
    <property type="project" value="UniProtKB-UniRule"/>
</dbReference>
<dbReference type="HAMAP" id="MF_01950">
    <property type="entry name" value="AcpH"/>
    <property type="match status" value="1"/>
</dbReference>
<dbReference type="InterPro" id="IPR007431">
    <property type="entry name" value="ACP_PD"/>
</dbReference>
<dbReference type="InterPro" id="IPR023491">
    <property type="entry name" value="ACP_phosphodiesterase_gpbac"/>
</dbReference>
<dbReference type="NCBIfam" id="NF007466">
    <property type="entry name" value="PRK10045.1"/>
    <property type="match status" value="1"/>
</dbReference>
<dbReference type="PANTHER" id="PTHR38764">
    <property type="entry name" value="ACYL CARRIER PROTEIN PHOSPHODIESTERASE"/>
    <property type="match status" value="1"/>
</dbReference>
<dbReference type="PANTHER" id="PTHR38764:SF1">
    <property type="entry name" value="ACYL CARRIER PROTEIN PHOSPHODIESTERASE"/>
    <property type="match status" value="1"/>
</dbReference>
<dbReference type="Pfam" id="PF04336">
    <property type="entry name" value="ACP_PD"/>
    <property type="match status" value="1"/>
</dbReference>
<dbReference type="PIRSF" id="PIRSF011489">
    <property type="entry name" value="DUF479"/>
    <property type="match status" value="1"/>
</dbReference>
<sequence length="193" mass="22976">MNFLAHLHLAHLADNSLSGNLLADFVRGNPATHYPPDVVEGIYMHRRIDVMTDNLPEAREAREWFRHETRRVAPITLDVMWDHFLSRHWTQISPDFPLQAFVGYAHAQVATILPDFPPRFVNLNDYLWSEKWLERYRDMDFIQNVLNGMANRRPRLDALRDSWYDLDAHYDALEERFWHFYPRMMAQAARKAL</sequence>
<gene>
    <name evidence="1" type="primary">acpH</name>
    <name type="ordered locus">SPA2320</name>
</gene>
<keyword id="KW-0275">Fatty acid biosynthesis</keyword>
<keyword id="KW-0276">Fatty acid metabolism</keyword>
<keyword id="KW-0378">Hydrolase</keyword>
<keyword id="KW-0444">Lipid biosynthesis</keyword>
<keyword id="KW-0443">Lipid metabolism</keyword>
<organism>
    <name type="scientific">Salmonella paratyphi A (strain ATCC 9150 / SARB42)</name>
    <dbReference type="NCBI Taxonomy" id="295319"/>
    <lineage>
        <taxon>Bacteria</taxon>
        <taxon>Pseudomonadati</taxon>
        <taxon>Pseudomonadota</taxon>
        <taxon>Gammaproteobacteria</taxon>
        <taxon>Enterobacterales</taxon>
        <taxon>Enterobacteriaceae</taxon>
        <taxon>Salmonella</taxon>
    </lineage>
</organism>
<reference key="1">
    <citation type="journal article" date="2004" name="Nat. Genet.">
        <title>Comparison of genome degradation in Paratyphi A and Typhi, human-restricted serovars of Salmonella enterica that cause typhoid.</title>
        <authorList>
            <person name="McClelland M."/>
            <person name="Sanderson K.E."/>
            <person name="Clifton S.W."/>
            <person name="Latreille P."/>
            <person name="Porwollik S."/>
            <person name="Sabo A."/>
            <person name="Meyer R."/>
            <person name="Bieri T."/>
            <person name="Ozersky P."/>
            <person name="McLellan M."/>
            <person name="Harkins C.R."/>
            <person name="Wang C."/>
            <person name="Nguyen C."/>
            <person name="Berghoff A."/>
            <person name="Elliott G."/>
            <person name="Kohlberg S."/>
            <person name="Strong C."/>
            <person name="Du F."/>
            <person name="Carter J."/>
            <person name="Kremizki C."/>
            <person name="Layman D."/>
            <person name="Leonard S."/>
            <person name="Sun H."/>
            <person name="Fulton L."/>
            <person name="Nash W."/>
            <person name="Miner T."/>
            <person name="Minx P."/>
            <person name="Delehaunty K."/>
            <person name="Fronick C."/>
            <person name="Magrini V."/>
            <person name="Nhan M."/>
            <person name="Warren W."/>
            <person name="Florea L."/>
            <person name="Spieth J."/>
            <person name="Wilson R.K."/>
        </authorList>
    </citation>
    <scope>NUCLEOTIDE SEQUENCE [LARGE SCALE GENOMIC DNA]</scope>
    <source>
        <strain>ATCC 9150 / SARB42</strain>
    </source>
</reference>